<keyword id="KW-0963">Cytoplasm</keyword>
<keyword id="KW-0479">Metal-binding</keyword>
<keyword id="KW-0520">NAD</keyword>
<keyword id="KW-0560">Oxidoreductase</keyword>
<keyword id="KW-1185">Reference proteome</keyword>
<keyword id="KW-0862">Zinc</keyword>
<reference key="1">
    <citation type="journal article" date="1999" name="Science">
        <title>Genome sequence of the radioresistant bacterium Deinococcus radiodurans R1.</title>
        <authorList>
            <person name="White O."/>
            <person name="Eisen J.A."/>
            <person name="Heidelberg J.F."/>
            <person name="Hickey E.K."/>
            <person name="Peterson J.D."/>
            <person name="Dodson R.J."/>
            <person name="Haft D.H."/>
            <person name="Gwinn M.L."/>
            <person name="Nelson W.C."/>
            <person name="Richardson D.L."/>
            <person name="Moffat K.S."/>
            <person name="Qin H."/>
            <person name="Jiang L."/>
            <person name="Pamphile W."/>
            <person name="Crosby M."/>
            <person name="Shen M."/>
            <person name="Vamathevan J.J."/>
            <person name="Lam P."/>
            <person name="McDonald L.A."/>
            <person name="Utterback T.R."/>
            <person name="Zalewski C."/>
            <person name="Makarova K.S."/>
            <person name="Aravind L."/>
            <person name="Daly M.J."/>
            <person name="Minton K.W."/>
            <person name="Fleischmann R.D."/>
            <person name="Ketchum K.A."/>
            <person name="Nelson K.E."/>
            <person name="Salzberg S.L."/>
            <person name="Smith H.O."/>
            <person name="Venter J.C."/>
            <person name="Fraser C.M."/>
        </authorList>
    </citation>
    <scope>NUCLEOTIDE SEQUENCE [LARGE SCALE GENOMIC DNA]</scope>
    <source>
        <strain>ATCC 13939 / DSM 20539 / JCM 16871 / CCUG 27074 / LMG 4051 / NBRC 15346 / NCIMB 9279 / VKM B-1422 / R1</strain>
    </source>
</reference>
<protein>
    <recommendedName>
        <fullName evidence="1">L-threonine 3-dehydrogenase</fullName>
        <shortName evidence="1">TDH</shortName>
        <ecNumber evidence="1">1.1.1.103</ecNumber>
    </recommendedName>
</protein>
<feature type="chain" id="PRO_0000160836" description="L-threonine 3-dehydrogenase">
    <location>
        <begin position="1"/>
        <end position="348"/>
    </location>
</feature>
<feature type="active site" description="Charge relay system" evidence="1">
    <location>
        <position position="40"/>
    </location>
</feature>
<feature type="active site" description="Charge relay system" evidence="1">
    <location>
        <position position="43"/>
    </location>
</feature>
<feature type="binding site" evidence="1">
    <location>
        <position position="38"/>
    </location>
    <ligand>
        <name>Zn(2+)</name>
        <dbReference type="ChEBI" id="CHEBI:29105"/>
        <label>1</label>
        <note>catalytic</note>
    </ligand>
</feature>
<feature type="binding site" evidence="1">
    <location>
        <position position="63"/>
    </location>
    <ligand>
        <name>Zn(2+)</name>
        <dbReference type="ChEBI" id="CHEBI:29105"/>
        <label>1</label>
        <note>catalytic</note>
    </ligand>
</feature>
<feature type="binding site" evidence="1">
    <location>
        <position position="64"/>
    </location>
    <ligand>
        <name>Zn(2+)</name>
        <dbReference type="ChEBI" id="CHEBI:29105"/>
        <label>1</label>
        <note>catalytic</note>
    </ligand>
</feature>
<feature type="binding site" evidence="1">
    <location>
        <position position="93"/>
    </location>
    <ligand>
        <name>Zn(2+)</name>
        <dbReference type="ChEBI" id="CHEBI:29105"/>
        <label>2</label>
    </ligand>
</feature>
<feature type="binding site" evidence="1">
    <location>
        <position position="96"/>
    </location>
    <ligand>
        <name>Zn(2+)</name>
        <dbReference type="ChEBI" id="CHEBI:29105"/>
        <label>2</label>
    </ligand>
</feature>
<feature type="binding site" evidence="1">
    <location>
        <position position="99"/>
    </location>
    <ligand>
        <name>Zn(2+)</name>
        <dbReference type="ChEBI" id="CHEBI:29105"/>
        <label>2</label>
    </ligand>
</feature>
<feature type="binding site" evidence="1">
    <location>
        <position position="107"/>
    </location>
    <ligand>
        <name>Zn(2+)</name>
        <dbReference type="ChEBI" id="CHEBI:29105"/>
        <label>2</label>
    </ligand>
</feature>
<feature type="binding site" evidence="1">
    <location>
        <position position="175"/>
    </location>
    <ligand>
        <name>NAD(+)</name>
        <dbReference type="ChEBI" id="CHEBI:57540"/>
    </ligand>
</feature>
<feature type="binding site" evidence="1">
    <location>
        <position position="195"/>
    </location>
    <ligand>
        <name>NAD(+)</name>
        <dbReference type="ChEBI" id="CHEBI:57540"/>
    </ligand>
</feature>
<feature type="binding site" evidence="1">
    <location>
        <position position="200"/>
    </location>
    <ligand>
        <name>NAD(+)</name>
        <dbReference type="ChEBI" id="CHEBI:57540"/>
    </ligand>
</feature>
<feature type="binding site" evidence="1">
    <location>
        <begin position="263"/>
        <end position="265"/>
    </location>
    <ligand>
        <name>NAD(+)</name>
        <dbReference type="ChEBI" id="CHEBI:57540"/>
    </ligand>
</feature>
<feature type="binding site" evidence="1">
    <location>
        <begin position="287"/>
        <end position="288"/>
    </location>
    <ligand>
        <name>NAD(+)</name>
        <dbReference type="ChEBI" id="CHEBI:57540"/>
    </ligand>
</feature>
<feature type="site" description="Important for catalytic activity for the proton relay mechanism but does not participate directly in the coordination of zinc atom" evidence="1">
    <location>
        <position position="148"/>
    </location>
</feature>
<name>TDH_DEIRA</name>
<sequence>MRALSKQQPGEGIWMIETEVPTPGPNDLLIRIRKGSICGTDVHIYKWDDWASQTVPVPMVVGHEYVGVVAGMGSEVRGFEIGDRVSGEGHVTCGHCRNCRAGRRHLCRNTQGVGVNRPGSFAEYLVLPAFNAFKLPDDIPDDVAAIFDPFGNAVHTALSFDLVGEDVLITGAGPIGCMAAAVARHVGARNVVITDVNDYRLDLARQMGVTRAVNVAREDLWTVATQELDMHEGFDVGMEMSGSGPAFAQMVSVMNNGGKVALLGIPSGEVQIDWNAVIFKMLTIKGIYGREMFETWYKMAALIQSGLDLTPVITHHYGIGDFQQGFDAMLSGQSGKVILDWETEEQSA</sequence>
<accession>Q9RTU4</accession>
<organism>
    <name type="scientific">Deinococcus radiodurans (strain ATCC 13939 / DSM 20539 / JCM 16871 / CCUG 27074 / LMG 4051 / NBRC 15346 / NCIMB 9279 / VKM B-1422 / R1)</name>
    <dbReference type="NCBI Taxonomy" id="243230"/>
    <lineage>
        <taxon>Bacteria</taxon>
        <taxon>Thermotogati</taxon>
        <taxon>Deinococcota</taxon>
        <taxon>Deinococci</taxon>
        <taxon>Deinococcales</taxon>
        <taxon>Deinococcaceae</taxon>
        <taxon>Deinococcus</taxon>
    </lineage>
</organism>
<evidence type="ECO:0000255" key="1">
    <source>
        <dbReference type="HAMAP-Rule" id="MF_00627"/>
    </source>
</evidence>
<evidence type="ECO:0000305" key="2"/>
<dbReference type="EC" id="1.1.1.103" evidence="1"/>
<dbReference type="EMBL" id="AE000513">
    <property type="protein sequence ID" value="AAF11215.1"/>
    <property type="status" value="ALT_INIT"/>
    <property type="molecule type" value="Genomic_DNA"/>
</dbReference>
<dbReference type="PIR" id="A75371">
    <property type="entry name" value="A75371"/>
</dbReference>
<dbReference type="RefSeq" id="NP_295385.2">
    <property type="nucleotide sequence ID" value="NC_001263.1"/>
</dbReference>
<dbReference type="RefSeq" id="WP_010888297.1">
    <property type="nucleotide sequence ID" value="NC_001263.1"/>
</dbReference>
<dbReference type="SMR" id="Q9RTU4"/>
<dbReference type="FunCoup" id="Q9RTU4">
    <property type="interactions" value="46"/>
</dbReference>
<dbReference type="STRING" id="243230.DR_1662"/>
<dbReference type="PaxDb" id="243230-DR_1662"/>
<dbReference type="EnsemblBacteria" id="AAF11215">
    <property type="protein sequence ID" value="AAF11215"/>
    <property type="gene ID" value="DR_1662"/>
</dbReference>
<dbReference type="GeneID" id="69517897"/>
<dbReference type="KEGG" id="dra:DR_1662"/>
<dbReference type="PATRIC" id="fig|243230.17.peg.1870"/>
<dbReference type="eggNOG" id="COG1063">
    <property type="taxonomic scope" value="Bacteria"/>
</dbReference>
<dbReference type="HOGENOM" id="CLU_026673_11_0_0"/>
<dbReference type="InParanoid" id="Q9RTU4"/>
<dbReference type="OrthoDB" id="9769198at2"/>
<dbReference type="UniPathway" id="UPA00046">
    <property type="reaction ID" value="UER00505"/>
</dbReference>
<dbReference type="Proteomes" id="UP000002524">
    <property type="component" value="Chromosome 1"/>
</dbReference>
<dbReference type="GO" id="GO:0005737">
    <property type="term" value="C:cytoplasm"/>
    <property type="evidence" value="ECO:0007669"/>
    <property type="project" value="UniProtKB-SubCell"/>
</dbReference>
<dbReference type="GO" id="GO:0008743">
    <property type="term" value="F:L-threonine 3-dehydrogenase activity"/>
    <property type="evidence" value="ECO:0007669"/>
    <property type="project" value="UniProtKB-UniRule"/>
</dbReference>
<dbReference type="GO" id="GO:0008270">
    <property type="term" value="F:zinc ion binding"/>
    <property type="evidence" value="ECO:0007669"/>
    <property type="project" value="UniProtKB-UniRule"/>
</dbReference>
<dbReference type="GO" id="GO:0019518">
    <property type="term" value="P:L-threonine catabolic process to glycine"/>
    <property type="evidence" value="ECO:0007669"/>
    <property type="project" value="UniProtKB-UniPathway"/>
</dbReference>
<dbReference type="Gene3D" id="3.90.180.10">
    <property type="entry name" value="Medium-chain alcohol dehydrogenases, catalytic domain"/>
    <property type="match status" value="1"/>
</dbReference>
<dbReference type="Gene3D" id="3.40.50.720">
    <property type="entry name" value="NAD(P)-binding Rossmann-like Domain"/>
    <property type="match status" value="1"/>
</dbReference>
<dbReference type="HAMAP" id="MF_00627">
    <property type="entry name" value="Thr_dehydrog"/>
    <property type="match status" value="1"/>
</dbReference>
<dbReference type="InterPro" id="IPR013149">
    <property type="entry name" value="ADH-like_C"/>
</dbReference>
<dbReference type="InterPro" id="IPR013154">
    <property type="entry name" value="ADH-like_N"/>
</dbReference>
<dbReference type="InterPro" id="IPR002328">
    <property type="entry name" value="ADH_Zn_CS"/>
</dbReference>
<dbReference type="InterPro" id="IPR011032">
    <property type="entry name" value="GroES-like_sf"/>
</dbReference>
<dbReference type="InterPro" id="IPR004627">
    <property type="entry name" value="L-Threonine_3-DHase"/>
</dbReference>
<dbReference type="InterPro" id="IPR036291">
    <property type="entry name" value="NAD(P)-bd_dom_sf"/>
</dbReference>
<dbReference type="InterPro" id="IPR020843">
    <property type="entry name" value="PKS_ER"/>
</dbReference>
<dbReference type="InterPro" id="IPR050129">
    <property type="entry name" value="Zn_alcohol_dh"/>
</dbReference>
<dbReference type="NCBIfam" id="NF003808">
    <property type="entry name" value="PRK05396.1"/>
    <property type="match status" value="1"/>
</dbReference>
<dbReference type="NCBIfam" id="TIGR00692">
    <property type="entry name" value="tdh"/>
    <property type="match status" value="1"/>
</dbReference>
<dbReference type="PANTHER" id="PTHR43401">
    <property type="entry name" value="L-THREONINE 3-DEHYDROGENASE"/>
    <property type="match status" value="1"/>
</dbReference>
<dbReference type="PANTHER" id="PTHR43401:SF2">
    <property type="entry name" value="L-THREONINE 3-DEHYDROGENASE"/>
    <property type="match status" value="1"/>
</dbReference>
<dbReference type="Pfam" id="PF08240">
    <property type="entry name" value="ADH_N"/>
    <property type="match status" value="1"/>
</dbReference>
<dbReference type="Pfam" id="PF00107">
    <property type="entry name" value="ADH_zinc_N"/>
    <property type="match status" value="1"/>
</dbReference>
<dbReference type="SMART" id="SM00829">
    <property type="entry name" value="PKS_ER"/>
    <property type="match status" value="1"/>
</dbReference>
<dbReference type="SUPFAM" id="SSF50129">
    <property type="entry name" value="GroES-like"/>
    <property type="match status" value="1"/>
</dbReference>
<dbReference type="SUPFAM" id="SSF51735">
    <property type="entry name" value="NAD(P)-binding Rossmann-fold domains"/>
    <property type="match status" value="1"/>
</dbReference>
<dbReference type="PROSITE" id="PS00059">
    <property type="entry name" value="ADH_ZINC"/>
    <property type="match status" value="1"/>
</dbReference>
<proteinExistence type="inferred from homology"/>
<comment type="function">
    <text evidence="1">Catalyzes the NAD(+)-dependent oxidation of L-threonine to 2-amino-3-ketobutyrate.</text>
</comment>
<comment type="catalytic activity">
    <reaction evidence="1">
        <text>L-threonine + NAD(+) = (2S)-2-amino-3-oxobutanoate + NADH + H(+)</text>
        <dbReference type="Rhea" id="RHEA:13161"/>
        <dbReference type="ChEBI" id="CHEBI:15378"/>
        <dbReference type="ChEBI" id="CHEBI:57540"/>
        <dbReference type="ChEBI" id="CHEBI:57926"/>
        <dbReference type="ChEBI" id="CHEBI:57945"/>
        <dbReference type="ChEBI" id="CHEBI:78948"/>
        <dbReference type="EC" id="1.1.1.103"/>
    </reaction>
</comment>
<comment type="cofactor">
    <cofactor evidence="1">
        <name>Zn(2+)</name>
        <dbReference type="ChEBI" id="CHEBI:29105"/>
    </cofactor>
    <text evidence="1">Binds 2 Zn(2+) ions per subunit.</text>
</comment>
<comment type="pathway">
    <text evidence="1">Amino-acid degradation; L-threonine degradation via oxydo-reductase pathway; glycine from L-threonine: step 1/2.</text>
</comment>
<comment type="subunit">
    <text evidence="1">Homotetramer.</text>
</comment>
<comment type="subcellular location">
    <subcellularLocation>
        <location evidence="1">Cytoplasm</location>
    </subcellularLocation>
</comment>
<comment type="similarity">
    <text evidence="1">Belongs to the zinc-containing alcohol dehydrogenase family.</text>
</comment>
<comment type="sequence caution" evidence="2">
    <conflict type="erroneous initiation">
        <sequence resource="EMBL-CDS" id="AAF11215"/>
    </conflict>
</comment>
<gene>
    <name evidence="1" type="primary">tdh</name>
    <name type="ordered locus">DR_1662</name>
</gene>